<protein>
    <recommendedName>
        <fullName evidence="1">Large ribosomal subunit protein uL5</fullName>
    </recommendedName>
    <alternativeName>
        <fullName evidence="2">50S ribosomal protein L5</fullName>
    </alternativeName>
</protein>
<proteinExistence type="inferred from homology"/>
<accession>C4K7A6</accession>
<keyword id="KW-0687">Ribonucleoprotein</keyword>
<keyword id="KW-0689">Ribosomal protein</keyword>
<keyword id="KW-0694">RNA-binding</keyword>
<keyword id="KW-0699">rRNA-binding</keyword>
<keyword id="KW-0820">tRNA-binding</keyword>
<name>RL5_HAMD5</name>
<organism>
    <name type="scientific">Hamiltonella defensa subsp. Acyrthosiphon pisum (strain 5AT)</name>
    <dbReference type="NCBI Taxonomy" id="572265"/>
    <lineage>
        <taxon>Bacteria</taxon>
        <taxon>Pseudomonadati</taxon>
        <taxon>Pseudomonadota</taxon>
        <taxon>Gammaproteobacteria</taxon>
        <taxon>Enterobacterales</taxon>
        <taxon>Enterobacteriaceae</taxon>
        <taxon>aphid secondary symbionts</taxon>
        <taxon>Candidatus Hamiltonella</taxon>
    </lineage>
</organism>
<comment type="function">
    <text evidence="1">This is one of the proteins that bind and probably mediate the attachment of the 5S RNA into the large ribosomal subunit, where it forms part of the central protuberance. In the 70S ribosome it contacts protein S13 of the 30S subunit (bridge B1b), connecting the 2 subunits; this bridge is implicated in subunit movement. Contacts the P site tRNA; the 5S rRNA and some of its associated proteins might help stabilize positioning of ribosome-bound tRNAs.</text>
</comment>
<comment type="subunit">
    <text evidence="1">Part of the 50S ribosomal subunit; part of the 5S rRNA/L5/L18/L25 subcomplex. Contacts the 5S rRNA and the P site tRNA. Forms a bridge to the 30S subunit in the 70S ribosome.</text>
</comment>
<comment type="similarity">
    <text evidence="1">Belongs to the universal ribosomal protein uL5 family.</text>
</comment>
<reference key="1">
    <citation type="journal article" date="2009" name="Proc. Natl. Acad. Sci. U.S.A.">
        <title>Hamiltonella defensa, genome evolution of protective bacterial endosymbiont from pathogenic ancestors.</title>
        <authorList>
            <person name="Degnan P.H."/>
            <person name="Yu Y."/>
            <person name="Sisneros N."/>
            <person name="Wing R.A."/>
            <person name="Moran N.A."/>
        </authorList>
    </citation>
    <scope>NUCLEOTIDE SEQUENCE [LARGE SCALE GENOMIC DNA]</scope>
    <source>
        <strain>5AT</strain>
    </source>
</reference>
<gene>
    <name evidence="1" type="primary">rplE</name>
    <name type="ordered locus">HDEF_1854</name>
</gene>
<evidence type="ECO:0000255" key="1">
    <source>
        <dbReference type="HAMAP-Rule" id="MF_01333"/>
    </source>
</evidence>
<evidence type="ECO:0000305" key="2"/>
<sequence length="179" mass="20099">MARLHDYYKDIVIKEMMCKFSYASVMQVPRVTKITLNMGVGEAVSDKKLLDSAMSDLAAISAQKPLVTKARKSVAGFSIRQGYPIGCKVTLRGKRMWEFLERLLSIAIPRIRDFRGLSKKSFDGRGNYNMGVSEQIIFPEINYDAIVKIFGLDISITTTAKSDDEGLALLAAFKFPFRK</sequence>
<feature type="chain" id="PRO_1000214634" description="Large ribosomal subunit protein uL5">
    <location>
        <begin position="1"/>
        <end position="179"/>
    </location>
</feature>
<dbReference type="EMBL" id="CP001277">
    <property type="protein sequence ID" value="ACQ68449.1"/>
    <property type="molecule type" value="Genomic_DNA"/>
</dbReference>
<dbReference type="RefSeq" id="WP_015874213.1">
    <property type="nucleotide sequence ID" value="NC_012751.1"/>
</dbReference>
<dbReference type="SMR" id="C4K7A6"/>
<dbReference type="STRING" id="572265.HDEF_1854"/>
<dbReference type="GeneID" id="66261439"/>
<dbReference type="KEGG" id="hde:HDEF_1854"/>
<dbReference type="eggNOG" id="COG0094">
    <property type="taxonomic scope" value="Bacteria"/>
</dbReference>
<dbReference type="HOGENOM" id="CLU_061015_2_1_6"/>
<dbReference type="Proteomes" id="UP000002334">
    <property type="component" value="Chromosome"/>
</dbReference>
<dbReference type="GO" id="GO:1990904">
    <property type="term" value="C:ribonucleoprotein complex"/>
    <property type="evidence" value="ECO:0007669"/>
    <property type="project" value="UniProtKB-KW"/>
</dbReference>
<dbReference type="GO" id="GO:0005840">
    <property type="term" value="C:ribosome"/>
    <property type="evidence" value="ECO:0007669"/>
    <property type="project" value="UniProtKB-KW"/>
</dbReference>
<dbReference type="GO" id="GO:0019843">
    <property type="term" value="F:rRNA binding"/>
    <property type="evidence" value="ECO:0007669"/>
    <property type="project" value="UniProtKB-UniRule"/>
</dbReference>
<dbReference type="GO" id="GO:0003735">
    <property type="term" value="F:structural constituent of ribosome"/>
    <property type="evidence" value="ECO:0007669"/>
    <property type="project" value="InterPro"/>
</dbReference>
<dbReference type="GO" id="GO:0000049">
    <property type="term" value="F:tRNA binding"/>
    <property type="evidence" value="ECO:0007669"/>
    <property type="project" value="UniProtKB-UniRule"/>
</dbReference>
<dbReference type="GO" id="GO:0006412">
    <property type="term" value="P:translation"/>
    <property type="evidence" value="ECO:0007669"/>
    <property type="project" value="UniProtKB-UniRule"/>
</dbReference>
<dbReference type="FunFam" id="3.30.1440.10:FF:000001">
    <property type="entry name" value="50S ribosomal protein L5"/>
    <property type="match status" value="1"/>
</dbReference>
<dbReference type="Gene3D" id="3.30.1440.10">
    <property type="match status" value="1"/>
</dbReference>
<dbReference type="HAMAP" id="MF_01333_B">
    <property type="entry name" value="Ribosomal_uL5_B"/>
    <property type="match status" value="1"/>
</dbReference>
<dbReference type="InterPro" id="IPR002132">
    <property type="entry name" value="Ribosomal_uL5"/>
</dbReference>
<dbReference type="InterPro" id="IPR020930">
    <property type="entry name" value="Ribosomal_uL5_bac-type"/>
</dbReference>
<dbReference type="InterPro" id="IPR031309">
    <property type="entry name" value="Ribosomal_uL5_C"/>
</dbReference>
<dbReference type="InterPro" id="IPR022803">
    <property type="entry name" value="Ribosomal_uL5_dom_sf"/>
</dbReference>
<dbReference type="InterPro" id="IPR031310">
    <property type="entry name" value="Ribosomal_uL5_N"/>
</dbReference>
<dbReference type="NCBIfam" id="NF000585">
    <property type="entry name" value="PRK00010.1"/>
    <property type="match status" value="1"/>
</dbReference>
<dbReference type="PANTHER" id="PTHR11994">
    <property type="entry name" value="60S RIBOSOMAL PROTEIN L11-RELATED"/>
    <property type="match status" value="1"/>
</dbReference>
<dbReference type="Pfam" id="PF00281">
    <property type="entry name" value="Ribosomal_L5"/>
    <property type="match status" value="1"/>
</dbReference>
<dbReference type="Pfam" id="PF00673">
    <property type="entry name" value="Ribosomal_L5_C"/>
    <property type="match status" value="1"/>
</dbReference>
<dbReference type="PIRSF" id="PIRSF002161">
    <property type="entry name" value="Ribosomal_L5"/>
    <property type="match status" value="1"/>
</dbReference>
<dbReference type="SUPFAM" id="SSF55282">
    <property type="entry name" value="RL5-like"/>
    <property type="match status" value="1"/>
</dbReference>